<comment type="function">
    <text evidence="1">Accelerates the degradation of transcripts by removing pyrophosphate from the 5'-end of triphosphorylated RNA, leading to a more labile monophosphorylated state that can stimulate subsequent ribonuclease cleavage.</text>
</comment>
<comment type="cofactor">
    <cofactor evidence="1">
        <name>a divalent metal cation</name>
        <dbReference type="ChEBI" id="CHEBI:60240"/>
    </cofactor>
</comment>
<comment type="similarity">
    <text evidence="1">Belongs to the Nudix hydrolase family. RppH subfamily.</text>
</comment>
<feature type="chain" id="PRO_1000078963" description="RNA pyrophosphohydrolase">
    <location>
        <begin position="1"/>
        <end position="155"/>
    </location>
</feature>
<feature type="domain" description="Nudix hydrolase" evidence="1">
    <location>
        <begin position="6"/>
        <end position="148"/>
    </location>
</feature>
<feature type="short sequence motif" description="Nudix box">
    <location>
        <begin position="38"/>
        <end position="59"/>
    </location>
</feature>
<gene>
    <name evidence="1" type="primary">rppH</name>
    <name evidence="1" type="synonym">nudH</name>
    <name type="ordered locus">Fphi_1062</name>
</gene>
<protein>
    <recommendedName>
        <fullName evidence="1">RNA pyrophosphohydrolase</fullName>
        <ecNumber evidence="1">3.6.1.-</ecNumber>
    </recommendedName>
    <alternativeName>
        <fullName evidence="1">(Di)nucleoside polyphosphate hydrolase</fullName>
    </alternativeName>
</protein>
<accession>B0TX27</accession>
<proteinExistence type="inferred from homology"/>
<name>RPPH_FRAP2</name>
<dbReference type="EC" id="3.6.1.-" evidence="1"/>
<dbReference type="EMBL" id="CP000937">
    <property type="protein sequence ID" value="ABZ87285.1"/>
    <property type="molecule type" value="Genomic_DNA"/>
</dbReference>
<dbReference type="SMR" id="B0TX27"/>
<dbReference type="KEGG" id="fph:Fphi_1062"/>
<dbReference type="eggNOG" id="COG0494">
    <property type="taxonomic scope" value="Bacteria"/>
</dbReference>
<dbReference type="HOGENOM" id="CLU_087195_3_1_6"/>
<dbReference type="GO" id="GO:0005737">
    <property type="term" value="C:cytoplasm"/>
    <property type="evidence" value="ECO:0007669"/>
    <property type="project" value="TreeGrafter"/>
</dbReference>
<dbReference type="GO" id="GO:0034353">
    <property type="term" value="F:mRNA 5'-diphosphatase activity"/>
    <property type="evidence" value="ECO:0007669"/>
    <property type="project" value="TreeGrafter"/>
</dbReference>
<dbReference type="GO" id="GO:0006402">
    <property type="term" value="P:mRNA catabolic process"/>
    <property type="evidence" value="ECO:0007669"/>
    <property type="project" value="TreeGrafter"/>
</dbReference>
<dbReference type="CDD" id="cd03671">
    <property type="entry name" value="NUDIX_Ap4A_hydrolase_plant_like"/>
    <property type="match status" value="1"/>
</dbReference>
<dbReference type="Gene3D" id="3.90.79.10">
    <property type="entry name" value="Nucleoside Triphosphate Pyrophosphohydrolase"/>
    <property type="match status" value="1"/>
</dbReference>
<dbReference type="HAMAP" id="MF_00298">
    <property type="entry name" value="Nudix_RppH"/>
    <property type="match status" value="1"/>
</dbReference>
<dbReference type="InterPro" id="IPR020476">
    <property type="entry name" value="Nudix_hydrolase"/>
</dbReference>
<dbReference type="InterPro" id="IPR015797">
    <property type="entry name" value="NUDIX_hydrolase-like_dom_sf"/>
</dbReference>
<dbReference type="InterPro" id="IPR020084">
    <property type="entry name" value="NUDIX_hydrolase_CS"/>
</dbReference>
<dbReference type="InterPro" id="IPR000086">
    <property type="entry name" value="NUDIX_hydrolase_dom"/>
</dbReference>
<dbReference type="InterPro" id="IPR022927">
    <property type="entry name" value="RppH"/>
</dbReference>
<dbReference type="NCBIfam" id="NF001936">
    <property type="entry name" value="PRK00714.1-3"/>
    <property type="match status" value="1"/>
</dbReference>
<dbReference type="NCBIfam" id="NF001937">
    <property type="entry name" value="PRK00714.1-4"/>
    <property type="match status" value="1"/>
</dbReference>
<dbReference type="NCBIfam" id="NF001938">
    <property type="entry name" value="PRK00714.1-5"/>
    <property type="match status" value="1"/>
</dbReference>
<dbReference type="PANTHER" id="PTHR23114">
    <property type="entry name" value="M7GPPPN-MRNA HYDROLASE"/>
    <property type="match status" value="1"/>
</dbReference>
<dbReference type="PANTHER" id="PTHR23114:SF17">
    <property type="entry name" value="M7GPPPN-MRNA HYDROLASE"/>
    <property type="match status" value="1"/>
</dbReference>
<dbReference type="Pfam" id="PF00293">
    <property type="entry name" value="NUDIX"/>
    <property type="match status" value="1"/>
</dbReference>
<dbReference type="PRINTS" id="PR00502">
    <property type="entry name" value="NUDIXFAMILY"/>
</dbReference>
<dbReference type="SUPFAM" id="SSF55811">
    <property type="entry name" value="Nudix"/>
    <property type="match status" value="1"/>
</dbReference>
<dbReference type="PROSITE" id="PS51462">
    <property type="entry name" value="NUDIX"/>
    <property type="match status" value="1"/>
</dbReference>
<dbReference type="PROSITE" id="PS00893">
    <property type="entry name" value="NUDIX_BOX"/>
    <property type="match status" value="1"/>
</dbReference>
<sequence length="155" mass="18593">MIDKSGYRANVAIVLLNRQDRVFWGQRKSRTSWQFPQGGVATGETPLQAMYRELYEEVGLRPHDVEVIASTRDWFKYDIPDSLVRSREPVCIGQKQKWFLLRLKTSESNINLEANDSPEFDNWRWVSYWYPINHVVYFKQDVYRRALTYFKEYIN</sequence>
<evidence type="ECO:0000255" key="1">
    <source>
        <dbReference type="HAMAP-Rule" id="MF_00298"/>
    </source>
</evidence>
<reference key="1">
    <citation type="submission" date="2007-12" db="EMBL/GenBank/DDBJ databases">
        <title>Complete sequence of chromosome of Francisella philomiragia subsp. philomiragia ATCC 25017.</title>
        <authorList>
            <consortium name="US DOE Joint Genome Institute"/>
            <person name="Copeland A."/>
            <person name="Lucas S."/>
            <person name="Lapidus A."/>
            <person name="Barry K."/>
            <person name="Detter J.C."/>
            <person name="Glavina del Rio T."/>
            <person name="Hammon N."/>
            <person name="Israni S."/>
            <person name="Dalin E."/>
            <person name="Tice H."/>
            <person name="Pitluck S."/>
            <person name="Chain P."/>
            <person name="Malfatti S."/>
            <person name="Shin M."/>
            <person name="Vergez L."/>
            <person name="Schmutz J."/>
            <person name="Larimer F."/>
            <person name="Land M."/>
            <person name="Hauser L."/>
            <person name="Richardson P."/>
        </authorList>
    </citation>
    <scope>NUCLEOTIDE SEQUENCE [LARGE SCALE GENOMIC DNA]</scope>
    <source>
        <strain>ATCC 25017 / CCUG 19701 / FSC 153 / O#319-036</strain>
    </source>
</reference>
<keyword id="KW-0378">Hydrolase</keyword>
<organism>
    <name type="scientific">Francisella philomiragia subsp. philomiragia (strain ATCC 25017 / CCUG 19701 / FSC 153 / O#319-036)</name>
    <dbReference type="NCBI Taxonomy" id="484022"/>
    <lineage>
        <taxon>Bacteria</taxon>
        <taxon>Pseudomonadati</taxon>
        <taxon>Pseudomonadota</taxon>
        <taxon>Gammaproteobacteria</taxon>
        <taxon>Thiotrichales</taxon>
        <taxon>Francisellaceae</taxon>
        <taxon>Francisella</taxon>
    </lineage>
</organism>